<feature type="chain" id="PRO_0000150018" description="Small proline-rich protein 2F">
    <location>
        <begin position="1"/>
        <end position="76"/>
    </location>
</feature>
<feature type="repeat" description="1">
    <location>
        <begin position="21"/>
        <end position="29"/>
    </location>
</feature>
<feature type="repeat" description="2">
    <location>
        <begin position="30"/>
        <end position="38"/>
    </location>
</feature>
<feature type="repeat" description="3">
    <location>
        <begin position="39"/>
        <end position="47"/>
    </location>
</feature>
<feature type="region of interest" description="3 X 9 AA approximate tandem repeats">
    <location>
        <begin position="21"/>
        <end position="47"/>
    </location>
</feature>
<feature type="region of interest" description="Disordered" evidence="2">
    <location>
        <begin position="53"/>
        <end position="76"/>
    </location>
</feature>
<evidence type="ECO:0000250" key="1"/>
<evidence type="ECO:0000256" key="2">
    <source>
        <dbReference type="SAM" id="MobiDB-lite"/>
    </source>
</evidence>
<evidence type="ECO:0000269" key="3">
    <source>
    </source>
</evidence>
<evidence type="ECO:0000305" key="4"/>
<gene>
    <name type="primary">Sprr2f</name>
</gene>
<name>SPR2F_MOUSE</name>
<organism>
    <name type="scientific">Mus musculus</name>
    <name type="common">Mouse</name>
    <dbReference type="NCBI Taxonomy" id="10090"/>
    <lineage>
        <taxon>Eukaryota</taxon>
        <taxon>Metazoa</taxon>
        <taxon>Chordata</taxon>
        <taxon>Craniata</taxon>
        <taxon>Vertebrata</taxon>
        <taxon>Euteleostomi</taxon>
        <taxon>Mammalia</taxon>
        <taxon>Eutheria</taxon>
        <taxon>Euarchontoglires</taxon>
        <taxon>Glires</taxon>
        <taxon>Rodentia</taxon>
        <taxon>Myomorpha</taxon>
        <taxon>Muroidea</taxon>
        <taxon>Muridae</taxon>
        <taxon>Murinae</taxon>
        <taxon>Mus</taxon>
        <taxon>Mus</taxon>
    </lineage>
</organism>
<reference key="1">
    <citation type="journal article" date="1999" name="Genomics">
        <title>Mouse Sprr2 genes: a clustered family of genes showing differential expression in epithelial tissues.</title>
        <authorList>
            <person name="Song H.J."/>
            <person name="Poy G."/>
            <person name="Darwiche N."/>
            <person name="Lichti U."/>
            <person name="Kuroki T."/>
            <person name="Steinert P.M."/>
            <person name="Kartasova T."/>
        </authorList>
    </citation>
    <scope>NUCLEOTIDE SEQUENCE [MRNA]</scope>
    <source>
        <strain>CD-1</strain>
    </source>
</reference>
<reference key="2">
    <citation type="journal article" date="2003" name="Mamm. Genome">
        <title>Mouse Sprr locus: a tandem array of coordinately regulated genes.</title>
        <authorList>
            <person name="Patel S."/>
            <person name="Kartasova T."/>
            <person name="Segre J.A."/>
        </authorList>
    </citation>
    <scope>NUCLEOTIDE SEQUENCE [MRNA]</scope>
    <source>
        <strain>C57BL/6J</strain>
    </source>
</reference>
<reference key="3">
    <citation type="journal article" date="2004" name="Mol. Cells">
        <title>Estrogen regulates the expression of the small proline-rich 2 gene family in the mouse uterus.</title>
        <authorList>
            <person name="Hong S.H."/>
            <person name="Nah H.Y."/>
            <person name="Lee J.Y."/>
            <person name="Lee Y.J."/>
            <person name="Lee J.W."/>
            <person name="Gye M.C."/>
            <person name="Kim C.H."/>
            <person name="Kang B.M."/>
            <person name="Kim M.K."/>
        </authorList>
    </citation>
    <scope>TISSUE SPECIFICITY</scope>
    <scope>DEVELOPMENTAL STAGE</scope>
    <scope>INDUCTION</scope>
</reference>
<dbReference type="EMBL" id="AJ005564">
    <property type="protein sequence ID" value="CAA06593.1"/>
    <property type="molecule type" value="mRNA"/>
</dbReference>
<dbReference type="EMBL" id="AY158990">
    <property type="protein sequence ID" value="AAN86827.1"/>
    <property type="molecule type" value="mRNA"/>
</dbReference>
<dbReference type="CCDS" id="CCDS57226.1"/>
<dbReference type="RefSeq" id="NP_035602.1">
    <property type="nucleotide sequence ID" value="NM_011472.3"/>
</dbReference>
<dbReference type="FunCoup" id="O70557">
    <property type="interactions" value="71"/>
</dbReference>
<dbReference type="STRING" id="10090.ENSMUSP00000050902"/>
<dbReference type="PhosphoSitePlus" id="O70557"/>
<dbReference type="PaxDb" id="10090-ENSMUSP00000050902"/>
<dbReference type="ProteomicsDB" id="263321"/>
<dbReference type="Pumba" id="O70557"/>
<dbReference type="DNASU" id="20760"/>
<dbReference type="Ensembl" id="ENSMUST00000050397.2">
    <property type="protein sequence ID" value="ENSMUSP00000050902.2"/>
    <property type="gene ID" value="ENSMUSG00000050635.2"/>
</dbReference>
<dbReference type="GeneID" id="20760"/>
<dbReference type="KEGG" id="mmu:20760"/>
<dbReference type="UCSC" id="uc008qdu.1">
    <property type="organism name" value="mouse"/>
</dbReference>
<dbReference type="AGR" id="MGI:1330349"/>
<dbReference type="CTD" id="6705"/>
<dbReference type="MGI" id="MGI:1330349">
    <property type="gene designation" value="Sprr2f"/>
</dbReference>
<dbReference type="VEuPathDB" id="HostDB:ENSMUSG00000050635"/>
<dbReference type="GeneTree" id="ENSGT01120000272819"/>
<dbReference type="HOGENOM" id="CLU_192372_0_0_1"/>
<dbReference type="InParanoid" id="O70557"/>
<dbReference type="OMA" id="CPPQHYR"/>
<dbReference type="BioGRID-ORCS" id="20760">
    <property type="hits" value="2 hits in 74 CRISPR screens"/>
</dbReference>
<dbReference type="PRO" id="PR:O70557"/>
<dbReference type="Proteomes" id="UP000000589">
    <property type="component" value="Chromosome 3"/>
</dbReference>
<dbReference type="RNAct" id="O70557">
    <property type="molecule type" value="protein"/>
</dbReference>
<dbReference type="Bgee" id="ENSMUSG00000050635">
    <property type="expression patterns" value="Expressed in uterine cervix and 42 other cell types or tissues"/>
</dbReference>
<dbReference type="GO" id="GO:0001533">
    <property type="term" value="C:cornified envelope"/>
    <property type="evidence" value="ECO:0000303"/>
    <property type="project" value="UniProtKB"/>
</dbReference>
<dbReference type="GO" id="GO:0005737">
    <property type="term" value="C:cytoplasm"/>
    <property type="evidence" value="ECO:0000314"/>
    <property type="project" value="UniProtKB"/>
</dbReference>
<dbReference type="GO" id="GO:0005634">
    <property type="term" value="C:nucleus"/>
    <property type="evidence" value="ECO:0000314"/>
    <property type="project" value="UniProtKB"/>
</dbReference>
<dbReference type="GO" id="GO:0008544">
    <property type="term" value="P:epidermis development"/>
    <property type="evidence" value="ECO:0000303"/>
    <property type="project" value="UniProtKB"/>
</dbReference>
<dbReference type="GO" id="GO:0031424">
    <property type="term" value="P:keratinization"/>
    <property type="evidence" value="ECO:0007669"/>
    <property type="project" value="UniProtKB-KW"/>
</dbReference>
<dbReference type="GO" id="GO:0030216">
    <property type="term" value="P:keratinocyte differentiation"/>
    <property type="evidence" value="ECO:0000303"/>
    <property type="project" value="UniProtKB"/>
</dbReference>
<dbReference type="GO" id="GO:0032355">
    <property type="term" value="P:response to estradiol"/>
    <property type="evidence" value="ECO:0000314"/>
    <property type="project" value="MGI"/>
</dbReference>
<dbReference type="InterPro" id="IPR029142">
    <property type="entry name" value="SPRR2"/>
</dbReference>
<dbReference type="Pfam" id="PF14820">
    <property type="entry name" value="SPRR2"/>
    <property type="match status" value="1"/>
</dbReference>
<dbReference type="PRINTS" id="PR00021">
    <property type="entry name" value="PRORICH"/>
</dbReference>
<accession>O70557</accession>
<comment type="function">
    <text evidence="1">Cross-linked envelope protein of keratinocytes. It is a keratinocyte protein that first appears in the cell cytosol, but ultimately becomes cross-linked to membrane proteins by transglutaminase. All that results in the formation of an insoluble envelope beneath the plasma membrane (By similarity).</text>
</comment>
<comment type="subcellular location">
    <subcellularLocation>
        <location evidence="1">Cytoplasm</location>
    </subcellularLocation>
</comment>
<comment type="tissue specificity">
    <text evidence="3">Expressed in uterus.</text>
</comment>
<comment type="developmental stage">
    <text evidence="3">Expression in uterus varies during the estrous cycle, with highest levels during proestrus and estrus stages and declining sharply from metestrus to diestrus. During early pregnancy, uterine expression is markedly increased at 1 dpc, declines rapidly at 2 dpc and is almost undetectable from 3 dpc to 6 dpc.</text>
</comment>
<comment type="induction">
    <text evidence="3">Up-regulated by estrogen in the uterus of ovariectomized animals, with strongly increased expression detected in luminal epithelial and stromal cells at 6 and 12 hours after hormone injection.</text>
</comment>
<comment type="similarity">
    <text evidence="4">Belongs to the cornifin (SPRR) family.</text>
</comment>
<keyword id="KW-0963">Cytoplasm</keyword>
<keyword id="KW-0417">Keratinization</keyword>
<keyword id="KW-1185">Reference proteome</keyword>
<keyword id="KW-0677">Repeat</keyword>
<proteinExistence type="evidence at transcript level"/>
<sequence length="76" mass="8271">MSYQEQQCKQPCQPPPVCPPPKCPEPCSPSVCPEPCPPPKCPEPCPEPCPPPSFQQKCPPVQPPPPCQQKCPPKSK</sequence>
<protein>
    <recommendedName>
        <fullName>Small proline-rich protein 2F</fullName>
    </recommendedName>
</protein>